<proteinExistence type="inferred from homology"/>
<evidence type="ECO:0000255" key="1">
    <source>
        <dbReference type="HAMAP-Rule" id="MF_01325"/>
    </source>
</evidence>
<evidence type="ECO:0000256" key="2">
    <source>
        <dbReference type="SAM" id="MobiDB-lite"/>
    </source>
</evidence>
<evidence type="ECO:0000305" key="3"/>
<reference key="1">
    <citation type="submission" date="2006-02" db="EMBL/GenBank/DDBJ databases">
        <title>Complete sequence of chromosome of Jannaschia sp. CCS1.</title>
        <authorList>
            <consortium name="US DOE Joint Genome Institute"/>
            <person name="Copeland A."/>
            <person name="Lucas S."/>
            <person name="Lapidus A."/>
            <person name="Barry K."/>
            <person name="Detter J.C."/>
            <person name="Glavina del Rio T."/>
            <person name="Hammon N."/>
            <person name="Israni S."/>
            <person name="Pitluck S."/>
            <person name="Brettin T."/>
            <person name="Bruce D."/>
            <person name="Han C."/>
            <person name="Tapia R."/>
            <person name="Gilna P."/>
            <person name="Chertkov O."/>
            <person name="Saunders E."/>
            <person name="Schmutz J."/>
            <person name="Larimer F."/>
            <person name="Land M."/>
            <person name="Kyrpides N."/>
            <person name="Lykidis A."/>
            <person name="Moran M.A."/>
            <person name="Belas R."/>
            <person name="Ye W."/>
            <person name="Buchan A."/>
            <person name="Gonzalez J.M."/>
            <person name="Schell M.A."/>
            <person name="Richardson P."/>
        </authorList>
    </citation>
    <scope>NUCLEOTIDE SEQUENCE [LARGE SCALE GENOMIC DNA]</scope>
    <source>
        <strain>CCS1</strain>
    </source>
</reference>
<protein>
    <recommendedName>
        <fullName evidence="1">Large ribosomal subunit protein uL3</fullName>
    </recommendedName>
    <alternativeName>
        <fullName evidence="3">50S ribosomal protein L3</fullName>
    </alternativeName>
</protein>
<accession>Q28UW2</accession>
<feature type="chain" id="PRO_0000241354" description="Large ribosomal subunit protein uL3">
    <location>
        <begin position="1"/>
        <end position="290"/>
    </location>
</feature>
<feature type="region of interest" description="Disordered" evidence="2">
    <location>
        <begin position="250"/>
        <end position="290"/>
    </location>
</feature>
<feature type="compositionally biased region" description="Low complexity" evidence="2">
    <location>
        <begin position="255"/>
        <end position="274"/>
    </location>
</feature>
<feature type="modified residue" description="N5-methylglutamine" evidence="1">
    <location>
        <position position="152"/>
    </location>
</feature>
<sequence>MLRSGVIAKKVGMTRLFMEDGKQIPVTVLQLDKLQVVAKKTSDSDGYSAVQLGAGTAKAKRTSAPMRGVFAKASVEPKRKLVEFRVDADNLIEVGEEIIADHYFEGQFVDVTGTSIGKGFQGAMKRHNFGGLRASHGVSISHRSHGSTGQCQDPGRVFKGKKMAGHMGAARVTTQNLQIVRTDTDRGLIMIKGAVPGSKGGWVTVKDAVKKPFPENAILPAALASAAAEAAKQAEEAAAAAAAEAEAEAARLAEEQAAAEAESLAQAEAEIAAEGSDAAPEGDADKKDGE</sequence>
<comment type="function">
    <text evidence="1">One of the primary rRNA binding proteins, it binds directly near the 3'-end of the 23S rRNA, where it nucleates assembly of the 50S subunit.</text>
</comment>
<comment type="subunit">
    <text evidence="1">Part of the 50S ribosomal subunit. Forms a cluster with proteins L14 and L19.</text>
</comment>
<comment type="PTM">
    <text evidence="1">Methylated by PrmB.</text>
</comment>
<comment type="similarity">
    <text evidence="1">Belongs to the universal ribosomal protein uL3 family.</text>
</comment>
<gene>
    <name evidence="1" type="primary">rplC</name>
    <name type="ordered locus">Jann_0583</name>
</gene>
<organism>
    <name type="scientific">Jannaschia sp. (strain CCS1)</name>
    <dbReference type="NCBI Taxonomy" id="290400"/>
    <lineage>
        <taxon>Bacteria</taxon>
        <taxon>Pseudomonadati</taxon>
        <taxon>Pseudomonadota</taxon>
        <taxon>Alphaproteobacteria</taxon>
        <taxon>Rhodobacterales</taxon>
        <taxon>Roseobacteraceae</taxon>
        <taxon>Jannaschia</taxon>
    </lineage>
</organism>
<name>RL3_JANSC</name>
<keyword id="KW-0488">Methylation</keyword>
<keyword id="KW-1185">Reference proteome</keyword>
<keyword id="KW-0687">Ribonucleoprotein</keyword>
<keyword id="KW-0689">Ribosomal protein</keyword>
<keyword id="KW-0694">RNA-binding</keyword>
<keyword id="KW-0699">rRNA-binding</keyword>
<dbReference type="EMBL" id="CP000264">
    <property type="protein sequence ID" value="ABD53500.1"/>
    <property type="molecule type" value="Genomic_DNA"/>
</dbReference>
<dbReference type="RefSeq" id="WP_011453708.1">
    <property type="nucleotide sequence ID" value="NC_007802.1"/>
</dbReference>
<dbReference type="SMR" id="Q28UW2"/>
<dbReference type="STRING" id="290400.Jann_0583"/>
<dbReference type="KEGG" id="jan:Jann_0583"/>
<dbReference type="eggNOG" id="COG0087">
    <property type="taxonomic scope" value="Bacteria"/>
</dbReference>
<dbReference type="HOGENOM" id="CLU_044142_2_0_5"/>
<dbReference type="OrthoDB" id="9806135at2"/>
<dbReference type="Proteomes" id="UP000008326">
    <property type="component" value="Chromosome"/>
</dbReference>
<dbReference type="GO" id="GO:0022625">
    <property type="term" value="C:cytosolic large ribosomal subunit"/>
    <property type="evidence" value="ECO:0007669"/>
    <property type="project" value="TreeGrafter"/>
</dbReference>
<dbReference type="GO" id="GO:0019843">
    <property type="term" value="F:rRNA binding"/>
    <property type="evidence" value="ECO:0007669"/>
    <property type="project" value="UniProtKB-UniRule"/>
</dbReference>
<dbReference type="GO" id="GO:0003735">
    <property type="term" value="F:structural constituent of ribosome"/>
    <property type="evidence" value="ECO:0007669"/>
    <property type="project" value="InterPro"/>
</dbReference>
<dbReference type="GO" id="GO:0006412">
    <property type="term" value="P:translation"/>
    <property type="evidence" value="ECO:0007669"/>
    <property type="project" value="UniProtKB-UniRule"/>
</dbReference>
<dbReference type="FunFam" id="2.40.30.10:FF:000004">
    <property type="entry name" value="50S ribosomal protein L3"/>
    <property type="match status" value="1"/>
</dbReference>
<dbReference type="FunFam" id="3.30.160.810:FF:000001">
    <property type="entry name" value="50S ribosomal protein L3"/>
    <property type="match status" value="1"/>
</dbReference>
<dbReference type="Gene3D" id="3.30.160.810">
    <property type="match status" value="1"/>
</dbReference>
<dbReference type="Gene3D" id="2.40.30.10">
    <property type="entry name" value="Translation factors"/>
    <property type="match status" value="1"/>
</dbReference>
<dbReference type="HAMAP" id="MF_01325_B">
    <property type="entry name" value="Ribosomal_uL3_B"/>
    <property type="match status" value="1"/>
</dbReference>
<dbReference type="InterPro" id="IPR000597">
    <property type="entry name" value="Ribosomal_uL3"/>
</dbReference>
<dbReference type="InterPro" id="IPR019927">
    <property type="entry name" value="Ribosomal_uL3_bac/org-type"/>
</dbReference>
<dbReference type="InterPro" id="IPR009000">
    <property type="entry name" value="Transl_B-barrel_sf"/>
</dbReference>
<dbReference type="NCBIfam" id="TIGR03625">
    <property type="entry name" value="L3_bact"/>
    <property type="match status" value="1"/>
</dbReference>
<dbReference type="PANTHER" id="PTHR11229">
    <property type="entry name" value="50S RIBOSOMAL PROTEIN L3"/>
    <property type="match status" value="1"/>
</dbReference>
<dbReference type="PANTHER" id="PTHR11229:SF16">
    <property type="entry name" value="LARGE RIBOSOMAL SUBUNIT PROTEIN UL3C"/>
    <property type="match status" value="1"/>
</dbReference>
<dbReference type="Pfam" id="PF00297">
    <property type="entry name" value="Ribosomal_L3"/>
    <property type="match status" value="1"/>
</dbReference>
<dbReference type="SUPFAM" id="SSF50447">
    <property type="entry name" value="Translation proteins"/>
    <property type="match status" value="1"/>
</dbReference>